<gene>
    <name type="ordered locus">CPE0304</name>
</gene>
<dbReference type="EMBL" id="BA000016">
    <property type="protein sequence ID" value="BAB80010.1"/>
    <property type="molecule type" value="Genomic_DNA"/>
</dbReference>
<dbReference type="RefSeq" id="WP_011009724.1">
    <property type="nucleotide sequence ID" value="NC_003366.1"/>
</dbReference>
<dbReference type="SMR" id="Q8XNM9"/>
<dbReference type="STRING" id="195102.gene:10489560"/>
<dbReference type="KEGG" id="cpe:CPE0304"/>
<dbReference type="HOGENOM" id="CLU_048251_3_1_9"/>
<dbReference type="Proteomes" id="UP000000818">
    <property type="component" value="Chromosome"/>
</dbReference>
<dbReference type="GO" id="GO:0008289">
    <property type="term" value="F:lipid binding"/>
    <property type="evidence" value="ECO:0007669"/>
    <property type="project" value="UniProtKB-KW"/>
</dbReference>
<dbReference type="Gene3D" id="3.30.1180.10">
    <property type="match status" value="1"/>
</dbReference>
<dbReference type="Gene3D" id="3.40.50.10170">
    <property type="match status" value="1"/>
</dbReference>
<dbReference type="InterPro" id="IPR003797">
    <property type="entry name" value="DegV"/>
</dbReference>
<dbReference type="InterPro" id="IPR043168">
    <property type="entry name" value="DegV_C"/>
</dbReference>
<dbReference type="InterPro" id="IPR050270">
    <property type="entry name" value="DegV_domain_contain"/>
</dbReference>
<dbReference type="NCBIfam" id="TIGR00762">
    <property type="entry name" value="DegV"/>
    <property type="match status" value="1"/>
</dbReference>
<dbReference type="PANTHER" id="PTHR33434">
    <property type="entry name" value="DEGV DOMAIN-CONTAINING PROTEIN DR_1986-RELATED"/>
    <property type="match status" value="1"/>
</dbReference>
<dbReference type="PANTHER" id="PTHR33434:SF2">
    <property type="entry name" value="FATTY ACID-BINDING PROTEIN TM_1468"/>
    <property type="match status" value="1"/>
</dbReference>
<dbReference type="Pfam" id="PF02645">
    <property type="entry name" value="DegV"/>
    <property type="match status" value="1"/>
</dbReference>
<dbReference type="SUPFAM" id="SSF82549">
    <property type="entry name" value="DAK1/DegV-like"/>
    <property type="match status" value="1"/>
</dbReference>
<dbReference type="PROSITE" id="PS51482">
    <property type="entry name" value="DEGV"/>
    <property type="match status" value="1"/>
</dbReference>
<keyword id="KW-0446">Lipid-binding</keyword>
<keyword id="KW-1185">Reference proteome</keyword>
<accession>Q8XNM9</accession>
<proteinExistence type="inferred from homology"/>
<protein>
    <recommendedName>
        <fullName>DegV domain-containing protein CPE0304</fullName>
    </recommendedName>
</protein>
<sequence length="283" mass="30842">MAVKVITDSTSCIPKDLAEKYGVEIVSLSVIMNGESYKEVDIDSEAFYDELAKCDKLPTSSQPPMDEFYNAFEKFAKDGHDIVAAFISSKLSGTYTTSHIIKDMILEKYPDVKIDLIDSQTSVMALGIGVLEGAKAAQEGKDFNEVSKIVRNTIEESEIIFVPGTLENLKKGGRIGGAAALFGKMLKINPILTVKEGAVVVMDKVRTKKRAIDKIVEVVKQDLKEKGIKQAVVCHILAEDEAKDLAKRLKEELDLDSMIGEISAVIGVHVGVKSVGIAYARES</sequence>
<evidence type="ECO:0000250" key="1"/>
<evidence type="ECO:0000250" key="2">
    <source>
        <dbReference type="UniProtKB" id="Q9X1H9"/>
    </source>
</evidence>
<evidence type="ECO:0000255" key="3">
    <source>
        <dbReference type="PROSITE-ProRule" id="PRU00815"/>
    </source>
</evidence>
<reference key="1">
    <citation type="journal article" date="2002" name="Proc. Natl. Acad. Sci. U.S.A.">
        <title>Complete genome sequence of Clostridium perfringens, an anaerobic flesh-eater.</title>
        <authorList>
            <person name="Shimizu T."/>
            <person name="Ohtani K."/>
            <person name="Hirakawa H."/>
            <person name="Ohshima K."/>
            <person name="Yamashita A."/>
            <person name="Shiba T."/>
            <person name="Ogasawara N."/>
            <person name="Hattori M."/>
            <person name="Kuhara S."/>
            <person name="Hayashi H."/>
        </authorList>
    </citation>
    <scope>NUCLEOTIDE SEQUENCE [LARGE SCALE GENOMIC DNA]</scope>
    <source>
        <strain>13 / Type A</strain>
    </source>
</reference>
<organism>
    <name type="scientific">Clostridium perfringens (strain 13 / Type A)</name>
    <dbReference type="NCBI Taxonomy" id="195102"/>
    <lineage>
        <taxon>Bacteria</taxon>
        <taxon>Bacillati</taxon>
        <taxon>Bacillota</taxon>
        <taxon>Clostridia</taxon>
        <taxon>Eubacteriales</taxon>
        <taxon>Clostridiaceae</taxon>
        <taxon>Clostridium</taxon>
    </lineage>
</organism>
<comment type="function">
    <text evidence="1">May bind long-chain fatty acids, such as palmitate, and may play a role in lipid transport or fatty acid metabolism.</text>
</comment>
<feature type="chain" id="PRO_0000209758" description="DegV domain-containing protein CPE0304">
    <location>
        <begin position="1"/>
        <end position="283"/>
    </location>
</feature>
<feature type="domain" description="DegV" evidence="3">
    <location>
        <begin position="3"/>
        <end position="281"/>
    </location>
</feature>
<feature type="binding site" evidence="2">
    <location>
        <position position="60"/>
    </location>
    <ligand>
        <name>hexadecanoate</name>
        <dbReference type="ChEBI" id="CHEBI:7896"/>
    </ligand>
</feature>
<feature type="binding site" evidence="2">
    <location>
        <position position="92"/>
    </location>
    <ligand>
        <name>hexadecanoate</name>
        <dbReference type="ChEBI" id="CHEBI:7896"/>
    </ligand>
</feature>
<name>Y304_CLOPE</name>